<reference key="1">
    <citation type="submission" date="2006-10" db="EMBL/GenBank/DDBJ databases">
        <authorList>
            <person name="Fleischmann R.D."/>
            <person name="Dodson R.J."/>
            <person name="Haft D.H."/>
            <person name="Merkel J.S."/>
            <person name="Nelson W.C."/>
            <person name="Fraser C.M."/>
        </authorList>
    </citation>
    <scope>NUCLEOTIDE SEQUENCE [LARGE SCALE GENOMIC DNA]</scope>
    <source>
        <strain>ATCC 700084 / mc(2)155</strain>
    </source>
</reference>
<reference key="2">
    <citation type="journal article" date="2007" name="Genome Biol.">
        <title>Interrupted coding sequences in Mycobacterium smegmatis: authentic mutations or sequencing errors?</title>
        <authorList>
            <person name="Deshayes C."/>
            <person name="Perrodou E."/>
            <person name="Gallien S."/>
            <person name="Euphrasie D."/>
            <person name="Schaeffer C."/>
            <person name="Van-Dorsselaer A."/>
            <person name="Poch O."/>
            <person name="Lecompte O."/>
            <person name="Reyrat J.-M."/>
        </authorList>
    </citation>
    <scope>NUCLEOTIDE SEQUENCE [LARGE SCALE GENOMIC DNA]</scope>
    <source>
        <strain>ATCC 700084 / mc(2)155</strain>
    </source>
</reference>
<reference key="3">
    <citation type="journal article" date="2009" name="Genome Res.">
        <title>Ortho-proteogenomics: multiple proteomes investigation through orthology and a new MS-based protocol.</title>
        <authorList>
            <person name="Gallien S."/>
            <person name="Perrodou E."/>
            <person name="Carapito C."/>
            <person name="Deshayes C."/>
            <person name="Reyrat J.-M."/>
            <person name="Van Dorsselaer A."/>
            <person name="Poch O."/>
            <person name="Schaeffer C."/>
            <person name="Lecompte O."/>
        </authorList>
    </citation>
    <scope>NUCLEOTIDE SEQUENCE [LARGE SCALE GENOMIC DNA]</scope>
    <source>
        <strain>ATCC 700084 / mc(2)155</strain>
    </source>
</reference>
<reference key="4">
    <citation type="submission" date="2013-01" db="PDB data bank">
        <title>Crystal structure of an acetate kinase from Mycobacterium smegmatis bound to AMP and sulfate.</title>
        <authorList>
            <consortium name="Seattle structural genomics center for infectious disease (SSGCID)"/>
        </authorList>
    </citation>
    <scope>X-RAY CRYSTALLOGRAPHY (1.7 ANGSTROMS) IN COMPLEX WITH THE ATP ANALOG AMP</scope>
    <scope>SUBUNIT</scope>
    <source>
        <strain>ATCC 700084 / mc(2)155</strain>
    </source>
</reference>
<feature type="chain" id="PRO_0000421948" description="Acetate kinase">
    <location>
        <begin position="1"/>
        <end position="376"/>
    </location>
</feature>
<feature type="active site" description="Proton donor/acceptor" evidence="1">
    <location>
        <position position="128"/>
    </location>
</feature>
<feature type="binding site" evidence="1">
    <location>
        <position position="7"/>
    </location>
    <ligand>
        <name>Mg(2+)</name>
        <dbReference type="ChEBI" id="CHEBI:18420"/>
    </ligand>
</feature>
<feature type="binding site" evidence="1">
    <location>
        <position position="14"/>
    </location>
    <ligand>
        <name>ATP</name>
        <dbReference type="ChEBI" id="CHEBI:30616"/>
    </ligand>
</feature>
<feature type="binding site" evidence="1">
    <location>
        <position position="71"/>
    </location>
    <ligand>
        <name>substrate</name>
    </ligand>
</feature>
<feature type="binding site">
    <location>
        <begin position="188"/>
        <end position="192"/>
    </location>
    <ligand>
        <name>ATP</name>
        <dbReference type="ChEBI" id="CHEBI:30616"/>
    </ligand>
</feature>
<feature type="binding site">
    <location>
        <begin position="262"/>
        <end position="264"/>
    </location>
    <ligand>
        <name>ATP</name>
        <dbReference type="ChEBI" id="CHEBI:30616"/>
    </ligand>
</feature>
<feature type="binding site">
    <location>
        <begin position="310"/>
        <end position="314"/>
    </location>
    <ligand>
        <name>ATP</name>
        <dbReference type="ChEBI" id="CHEBI:30616"/>
    </ligand>
</feature>
<feature type="binding site" evidence="1">
    <location>
        <position position="364"/>
    </location>
    <ligand>
        <name>Mg(2+)</name>
        <dbReference type="ChEBI" id="CHEBI:18420"/>
    </ligand>
</feature>
<feature type="site" description="Transition state stabilizer" evidence="1">
    <location>
        <position position="160"/>
    </location>
</feature>
<feature type="site" description="Transition state stabilizer" evidence="1">
    <location>
        <position position="221"/>
    </location>
</feature>
<feature type="strand" evidence="3">
    <location>
        <begin position="2"/>
        <end position="8"/>
    </location>
</feature>
<feature type="strand" evidence="3">
    <location>
        <begin position="13"/>
        <end position="18"/>
    </location>
</feature>
<feature type="turn" evidence="3">
    <location>
        <begin position="20"/>
        <end position="22"/>
    </location>
</feature>
<feature type="strand" evidence="3">
    <location>
        <begin position="25"/>
        <end position="31"/>
    </location>
</feature>
<feature type="helix" evidence="3">
    <location>
        <begin position="42"/>
        <end position="55"/>
    </location>
</feature>
<feature type="helix" evidence="3">
    <location>
        <begin position="60"/>
        <end position="62"/>
    </location>
</feature>
<feature type="strand" evidence="3">
    <location>
        <begin position="65"/>
        <end position="73"/>
    </location>
</feature>
<feature type="turn" evidence="3">
    <location>
        <begin position="76"/>
        <end position="78"/>
    </location>
</feature>
<feature type="helix" evidence="3">
    <location>
        <begin position="87"/>
        <end position="95"/>
    </location>
</feature>
<feature type="helix" evidence="3">
    <location>
        <begin position="97"/>
        <end position="99"/>
    </location>
</feature>
<feature type="turn" evidence="3">
    <location>
        <begin position="101"/>
        <end position="103"/>
    </location>
</feature>
<feature type="helix" evidence="3">
    <location>
        <begin position="104"/>
        <end position="117"/>
    </location>
</feature>
<feature type="strand" evidence="3">
    <location>
        <begin position="123"/>
        <end position="127"/>
    </location>
</feature>
<feature type="helix" evidence="3">
    <location>
        <begin position="130"/>
        <end position="132"/>
    </location>
</feature>
<feature type="helix" evidence="3">
    <location>
        <begin position="137"/>
        <end position="140"/>
    </location>
</feature>
<feature type="helix" evidence="3">
    <location>
        <begin position="146"/>
        <end position="151"/>
    </location>
</feature>
<feature type="helix" evidence="3">
    <location>
        <begin position="161"/>
        <end position="174"/>
    </location>
</feature>
<feature type="helix" evidence="3">
    <location>
        <begin position="179"/>
        <end position="181"/>
    </location>
</feature>
<feature type="strand" evidence="3">
    <location>
        <begin position="183"/>
        <end position="199"/>
    </location>
</feature>
<feature type="strand" evidence="3">
    <location>
        <begin position="202"/>
        <end position="207"/>
    </location>
</feature>
<feature type="strand" evidence="3">
    <location>
        <begin position="214"/>
        <end position="216"/>
    </location>
</feature>
<feature type="helix" evidence="3">
    <location>
        <begin position="227"/>
        <end position="235"/>
    </location>
</feature>
<feature type="helix" evidence="3">
    <location>
        <begin position="241"/>
        <end position="250"/>
    </location>
</feature>
<feature type="helix" evidence="3">
    <location>
        <begin position="253"/>
        <end position="258"/>
    </location>
</feature>
<feature type="helix" evidence="3">
    <location>
        <begin position="263"/>
        <end position="271"/>
    </location>
</feature>
<feature type="helix" evidence="3">
    <location>
        <begin position="275"/>
        <end position="299"/>
    </location>
</feature>
<feature type="strand" evidence="3">
    <location>
        <begin position="304"/>
        <end position="308"/>
    </location>
</feature>
<feature type="helix" evidence="3">
    <location>
        <begin position="309"/>
        <end position="314"/>
    </location>
</feature>
<feature type="helix" evidence="3">
    <location>
        <begin position="316"/>
        <end position="323"/>
    </location>
</feature>
<feature type="helix" evidence="3">
    <location>
        <begin position="327"/>
        <end position="329"/>
    </location>
</feature>
<feature type="helix" evidence="3">
    <location>
        <begin position="335"/>
        <end position="339"/>
    </location>
</feature>
<feature type="strand" evidence="3">
    <location>
        <begin position="354"/>
        <end position="359"/>
    </location>
</feature>
<feature type="helix" evidence="3">
    <location>
        <begin position="364"/>
        <end position="372"/>
    </location>
</feature>
<organism>
    <name type="scientific">Mycolicibacterium smegmatis (strain ATCC 700084 / mc(2)155)</name>
    <name type="common">Mycobacterium smegmatis</name>
    <dbReference type="NCBI Taxonomy" id="246196"/>
    <lineage>
        <taxon>Bacteria</taxon>
        <taxon>Bacillati</taxon>
        <taxon>Actinomycetota</taxon>
        <taxon>Actinomycetes</taxon>
        <taxon>Mycobacteriales</taxon>
        <taxon>Mycobacteriaceae</taxon>
        <taxon>Mycolicibacterium</taxon>
    </lineage>
</organism>
<accession>A0QQK1</accession>
<evidence type="ECO:0000255" key="1">
    <source>
        <dbReference type="HAMAP-Rule" id="MF_00020"/>
    </source>
</evidence>
<evidence type="ECO:0000305" key="2">
    <source ref="4"/>
</evidence>
<evidence type="ECO:0007829" key="3">
    <source>
        <dbReference type="PDB" id="4IJN"/>
    </source>
</evidence>
<protein>
    <recommendedName>
        <fullName evidence="1">Acetate kinase</fullName>
        <ecNumber evidence="1">2.7.2.1</ecNumber>
    </recommendedName>
    <alternativeName>
        <fullName evidence="1">Acetokinase</fullName>
    </alternativeName>
</protein>
<name>ACKA_MYCS2</name>
<dbReference type="EC" id="2.7.2.1" evidence="1"/>
<dbReference type="EMBL" id="CP000480">
    <property type="protein sequence ID" value="ABK74906.1"/>
    <property type="molecule type" value="Genomic_DNA"/>
</dbReference>
<dbReference type="EMBL" id="CP001663">
    <property type="protein sequence ID" value="AFP37248.1"/>
    <property type="molecule type" value="Genomic_DNA"/>
</dbReference>
<dbReference type="RefSeq" id="WP_011727188.1">
    <property type="nucleotide sequence ID" value="NZ_SIJM01000036.1"/>
</dbReference>
<dbReference type="RefSeq" id="YP_885189.1">
    <property type="nucleotide sequence ID" value="NC_008596.1"/>
</dbReference>
<dbReference type="PDB" id="4IJN">
    <property type="method" value="X-ray"/>
    <property type="resolution" value="1.70 A"/>
    <property type="chains" value="A/B=2-376"/>
</dbReference>
<dbReference type="PDBsum" id="4IJN"/>
<dbReference type="SMR" id="A0QQK1"/>
<dbReference type="STRING" id="246196.MSMEG_0784"/>
<dbReference type="PaxDb" id="246196-MSMEI_0768"/>
<dbReference type="KEGG" id="msb:LJ00_03895"/>
<dbReference type="KEGG" id="msg:MSMEI_0768"/>
<dbReference type="KEGG" id="msm:MSMEG_0784"/>
<dbReference type="PATRIC" id="fig|246196.19.peg.779"/>
<dbReference type="eggNOG" id="COG0282">
    <property type="taxonomic scope" value="Bacteria"/>
</dbReference>
<dbReference type="OrthoDB" id="9802453at2"/>
<dbReference type="UniPathway" id="UPA00340">
    <property type="reaction ID" value="UER00458"/>
</dbReference>
<dbReference type="EvolutionaryTrace" id="A0QQK1"/>
<dbReference type="Proteomes" id="UP000000757">
    <property type="component" value="Chromosome"/>
</dbReference>
<dbReference type="Proteomes" id="UP000006158">
    <property type="component" value="Chromosome"/>
</dbReference>
<dbReference type="GO" id="GO:0005737">
    <property type="term" value="C:cytoplasm"/>
    <property type="evidence" value="ECO:0007669"/>
    <property type="project" value="UniProtKB-SubCell"/>
</dbReference>
<dbReference type="GO" id="GO:0008776">
    <property type="term" value="F:acetate kinase activity"/>
    <property type="evidence" value="ECO:0007669"/>
    <property type="project" value="UniProtKB-UniRule"/>
</dbReference>
<dbReference type="GO" id="GO:0005524">
    <property type="term" value="F:ATP binding"/>
    <property type="evidence" value="ECO:0007669"/>
    <property type="project" value="UniProtKB-KW"/>
</dbReference>
<dbReference type="GO" id="GO:0000287">
    <property type="term" value="F:magnesium ion binding"/>
    <property type="evidence" value="ECO:0007669"/>
    <property type="project" value="UniProtKB-UniRule"/>
</dbReference>
<dbReference type="GO" id="GO:0006083">
    <property type="term" value="P:acetate metabolic process"/>
    <property type="evidence" value="ECO:0007669"/>
    <property type="project" value="TreeGrafter"/>
</dbReference>
<dbReference type="GO" id="GO:0006085">
    <property type="term" value="P:acetyl-CoA biosynthetic process"/>
    <property type="evidence" value="ECO:0007669"/>
    <property type="project" value="UniProtKB-UniRule"/>
</dbReference>
<dbReference type="CDD" id="cd24010">
    <property type="entry name" value="ASKHA_NBD_AcK_PK"/>
    <property type="match status" value="1"/>
</dbReference>
<dbReference type="Gene3D" id="3.30.420.40">
    <property type="match status" value="2"/>
</dbReference>
<dbReference type="HAMAP" id="MF_00020">
    <property type="entry name" value="Acetate_kinase"/>
    <property type="match status" value="1"/>
</dbReference>
<dbReference type="InterPro" id="IPR004372">
    <property type="entry name" value="Ac/propionate_kinase"/>
</dbReference>
<dbReference type="InterPro" id="IPR000890">
    <property type="entry name" value="Aliphatic_acid_kin_short-chain"/>
</dbReference>
<dbReference type="InterPro" id="IPR023865">
    <property type="entry name" value="Aliphatic_acid_kinase_CS"/>
</dbReference>
<dbReference type="InterPro" id="IPR043129">
    <property type="entry name" value="ATPase_NBD"/>
</dbReference>
<dbReference type="NCBIfam" id="TIGR00016">
    <property type="entry name" value="ackA"/>
    <property type="match status" value="1"/>
</dbReference>
<dbReference type="PANTHER" id="PTHR21060">
    <property type="entry name" value="ACETATE KINASE"/>
    <property type="match status" value="1"/>
</dbReference>
<dbReference type="PANTHER" id="PTHR21060:SF15">
    <property type="entry name" value="ACETATE KINASE-RELATED"/>
    <property type="match status" value="1"/>
</dbReference>
<dbReference type="Pfam" id="PF00871">
    <property type="entry name" value="Acetate_kinase"/>
    <property type="match status" value="1"/>
</dbReference>
<dbReference type="PIRSF" id="PIRSF000722">
    <property type="entry name" value="Acetate_prop_kin"/>
    <property type="match status" value="1"/>
</dbReference>
<dbReference type="PRINTS" id="PR00471">
    <property type="entry name" value="ACETATEKNASE"/>
</dbReference>
<dbReference type="SUPFAM" id="SSF53067">
    <property type="entry name" value="Actin-like ATPase domain"/>
    <property type="match status" value="2"/>
</dbReference>
<dbReference type="PROSITE" id="PS01075">
    <property type="entry name" value="ACETATE_KINASE_1"/>
    <property type="match status" value="1"/>
</dbReference>
<dbReference type="PROSITE" id="PS01076">
    <property type="entry name" value="ACETATE_KINASE_2"/>
    <property type="match status" value="1"/>
</dbReference>
<keyword id="KW-0002">3D-structure</keyword>
<keyword id="KW-0067">ATP-binding</keyword>
<keyword id="KW-0963">Cytoplasm</keyword>
<keyword id="KW-0418">Kinase</keyword>
<keyword id="KW-0460">Magnesium</keyword>
<keyword id="KW-0479">Metal-binding</keyword>
<keyword id="KW-0547">Nucleotide-binding</keyword>
<keyword id="KW-1185">Reference proteome</keyword>
<keyword id="KW-0808">Transferase</keyword>
<proteinExistence type="evidence at protein level"/>
<sequence>MTVLVVNSGSSSLKYAVVRPASGEFLADGIIEEIGSGAVPDHDAALRAAFDELAAAGLHLEDLDLKAVGHRMVHGGKTFYKPSVVDDELIAKARELSPLAPLHNPPAIKGIEVARKLLPDLPHIAVFDTAFFHDLPAPASTYAIDRELAETWHIKRYGFHGTSHEYVSQQAAIFLDRPLESLNQIVLHLGNGASASAVAGGKAVDTSMGLTPMEGLVMGTRSGDIDPGVIMYLWRTAGMSVDDIESMLNRRSGVLGLGGASDFRKLRELIESGDEHAKLAYDVYIHRLRKYIGAYMAVLGRTDVISFTAGVGENVPPVRRDALAGLGGLGIEIDDALNSAKSDEPRLISTPDSRVTVLVVPTNEELAIARACVGVV</sequence>
<comment type="function">
    <text evidence="1">Catalyzes the formation of acetyl phosphate from acetate and ATP. Can also catalyze the reverse reaction.</text>
</comment>
<comment type="catalytic activity">
    <reaction evidence="1">
        <text>acetate + ATP = acetyl phosphate + ADP</text>
        <dbReference type="Rhea" id="RHEA:11352"/>
        <dbReference type="ChEBI" id="CHEBI:22191"/>
        <dbReference type="ChEBI" id="CHEBI:30089"/>
        <dbReference type="ChEBI" id="CHEBI:30616"/>
        <dbReference type="ChEBI" id="CHEBI:456216"/>
        <dbReference type="EC" id="2.7.2.1"/>
    </reaction>
</comment>
<comment type="cofactor">
    <cofactor evidence="1">
        <name>Mg(2+)</name>
        <dbReference type="ChEBI" id="CHEBI:18420"/>
    </cofactor>
    <cofactor evidence="1">
        <name>Mn(2+)</name>
        <dbReference type="ChEBI" id="CHEBI:29035"/>
    </cofactor>
    <text evidence="1">Mg(2+). Can also accept Mn(2+).</text>
</comment>
<comment type="pathway">
    <text evidence="1">Metabolic intermediate biosynthesis; acetyl-CoA biosynthesis; acetyl-CoA from acetate: step 1/2.</text>
</comment>
<comment type="subunit">
    <text evidence="2">Homodimer.</text>
</comment>
<comment type="subcellular location">
    <subcellularLocation>
        <location evidence="1">Cytoplasm</location>
    </subcellularLocation>
</comment>
<comment type="similarity">
    <text evidence="1">Belongs to the acetokinase family.</text>
</comment>
<gene>
    <name evidence="1" type="primary">ackA</name>
    <name type="ordered locus">MSMEG_0784</name>
    <name type="ordered locus">MSMEI_0768</name>
</gene>